<protein>
    <recommendedName>
        <fullName evidence="1">tRNA pseudouridine synthase A</fullName>
        <ecNumber evidence="1">5.4.99.12</ecNumber>
    </recommendedName>
    <alternativeName>
        <fullName evidence="1">tRNA pseudouridine(38-40) synthase</fullName>
    </alternativeName>
    <alternativeName>
        <fullName evidence="1">tRNA pseudouridylate synthase I</fullName>
    </alternativeName>
    <alternativeName>
        <fullName evidence="1">tRNA-uridine isomerase I</fullName>
    </alternativeName>
</protein>
<accession>B8CPW5</accession>
<organism>
    <name type="scientific">Shewanella piezotolerans (strain WP3 / JCM 13877)</name>
    <dbReference type="NCBI Taxonomy" id="225849"/>
    <lineage>
        <taxon>Bacteria</taxon>
        <taxon>Pseudomonadati</taxon>
        <taxon>Pseudomonadota</taxon>
        <taxon>Gammaproteobacteria</taxon>
        <taxon>Alteromonadales</taxon>
        <taxon>Shewanellaceae</taxon>
        <taxon>Shewanella</taxon>
    </lineage>
</organism>
<feature type="chain" id="PRO_1000194568" description="tRNA pseudouridine synthase A">
    <location>
        <begin position="1"/>
        <end position="261"/>
    </location>
</feature>
<feature type="active site" description="Nucleophile" evidence="1">
    <location>
        <position position="51"/>
    </location>
</feature>
<feature type="binding site" evidence="1">
    <location>
        <position position="109"/>
    </location>
    <ligand>
        <name>substrate</name>
    </ligand>
</feature>
<gene>
    <name evidence="1" type="primary">truA</name>
    <name type="ordered locus">swp_3116</name>
</gene>
<sequence length="261" mass="29608">MRVALGIEYDGSRYYGWQRQLDVDSVQGQLEKALSKVANEPITVQCAGRTDTGVHGTGQVVHFDTNAIRKETAWTLGVNVNLPDDIAVRWVKVVDEEFHARFSATARRYRYMIYNHQLRPGILRSGVSHYRGNIDEDKMHQAAQLFVGEHDFTSFRALQCQSKTPFREIHEVNVTRQGMYICVDIKANAFLHHMVRNIVGTLLEIGKGNQPKEWVNTLLALKDRSKAAATAQPNGLYLVDVTYPEHFQLPKLALGPLFMLD</sequence>
<keyword id="KW-0413">Isomerase</keyword>
<keyword id="KW-0819">tRNA processing</keyword>
<proteinExistence type="inferred from homology"/>
<name>TRUA_SHEPW</name>
<reference key="1">
    <citation type="journal article" date="2008" name="PLoS ONE">
        <title>Environmental adaptation: genomic analysis of the piezotolerant and psychrotolerant deep-sea iron reducing bacterium Shewanella piezotolerans WP3.</title>
        <authorList>
            <person name="Wang F."/>
            <person name="Wang J."/>
            <person name="Jian H."/>
            <person name="Zhang B."/>
            <person name="Li S."/>
            <person name="Wang F."/>
            <person name="Zeng X."/>
            <person name="Gao L."/>
            <person name="Bartlett D.H."/>
            <person name="Yu J."/>
            <person name="Hu S."/>
            <person name="Xiao X."/>
        </authorList>
    </citation>
    <scope>NUCLEOTIDE SEQUENCE [LARGE SCALE GENOMIC DNA]</scope>
    <source>
        <strain>WP3 / JCM 13877</strain>
    </source>
</reference>
<comment type="function">
    <text evidence="1">Formation of pseudouridine at positions 38, 39 and 40 in the anticodon stem and loop of transfer RNAs.</text>
</comment>
<comment type="catalytic activity">
    <reaction evidence="1">
        <text>uridine(38/39/40) in tRNA = pseudouridine(38/39/40) in tRNA</text>
        <dbReference type="Rhea" id="RHEA:22376"/>
        <dbReference type="Rhea" id="RHEA-COMP:10085"/>
        <dbReference type="Rhea" id="RHEA-COMP:10087"/>
        <dbReference type="ChEBI" id="CHEBI:65314"/>
        <dbReference type="ChEBI" id="CHEBI:65315"/>
        <dbReference type="EC" id="5.4.99.12"/>
    </reaction>
</comment>
<comment type="subunit">
    <text evidence="1">Homodimer.</text>
</comment>
<comment type="similarity">
    <text evidence="1">Belongs to the tRNA pseudouridine synthase TruA family.</text>
</comment>
<evidence type="ECO:0000255" key="1">
    <source>
        <dbReference type="HAMAP-Rule" id="MF_00171"/>
    </source>
</evidence>
<dbReference type="EC" id="5.4.99.12" evidence="1"/>
<dbReference type="EMBL" id="CP000472">
    <property type="protein sequence ID" value="ACJ29828.1"/>
    <property type="molecule type" value="Genomic_DNA"/>
</dbReference>
<dbReference type="RefSeq" id="WP_020913179.1">
    <property type="nucleotide sequence ID" value="NC_011566.1"/>
</dbReference>
<dbReference type="SMR" id="B8CPW5"/>
<dbReference type="STRING" id="225849.swp_3116"/>
<dbReference type="KEGG" id="swp:swp_3116"/>
<dbReference type="eggNOG" id="COG0101">
    <property type="taxonomic scope" value="Bacteria"/>
</dbReference>
<dbReference type="HOGENOM" id="CLU_014673_0_2_6"/>
<dbReference type="OrthoDB" id="9811823at2"/>
<dbReference type="Proteomes" id="UP000000753">
    <property type="component" value="Chromosome"/>
</dbReference>
<dbReference type="GO" id="GO:0003723">
    <property type="term" value="F:RNA binding"/>
    <property type="evidence" value="ECO:0007669"/>
    <property type="project" value="InterPro"/>
</dbReference>
<dbReference type="GO" id="GO:0160147">
    <property type="term" value="F:tRNA pseudouridine(38-40) synthase activity"/>
    <property type="evidence" value="ECO:0007669"/>
    <property type="project" value="UniProtKB-EC"/>
</dbReference>
<dbReference type="GO" id="GO:0031119">
    <property type="term" value="P:tRNA pseudouridine synthesis"/>
    <property type="evidence" value="ECO:0007669"/>
    <property type="project" value="UniProtKB-UniRule"/>
</dbReference>
<dbReference type="CDD" id="cd02570">
    <property type="entry name" value="PseudoU_synth_EcTruA"/>
    <property type="match status" value="1"/>
</dbReference>
<dbReference type="FunFam" id="3.30.70.580:FF:000001">
    <property type="entry name" value="tRNA pseudouridine synthase A"/>
    <property type="match status" value="1"/>
</dbReference>
<dbReference type="FunFam" id="3.30.70.660:FF:000001">
    <property type="entry name" value="tRNA pseudouridine synthase A"/>
    <property type="match status" value="1"/>
</dbReference>
<dbReference type="Gene3D" id="3.30.70.660">
    <property type="entry name" value="Pseudouridine synthase I, catalytic domain, C-terminal subdomain"/>
    <property type="match status" value="1"/>
</dbReference>
<dbReference type="Gene3D" id="3.30.70.580">
    <property type="entry name" value="Pseudouridine synthase I, catalytic domain, N-terminal subdomain"/>
    <property type="match status" value="1"/>
</dbReference>
<dbReference type="HAMAP" id="MF_00171">
    <property type="entry name" value="TruA"/>
    <property type="match status" value="1"/>
</dbReference>
<dbReference type="InterPro" id="IPR020103">
    <property type="entry name" value="PsdUridine_synth_cat_dom_sf"/>
</dbReference>
<dbReference type="InterPro" id="IPR001406">
    <property type="entry name" value="PsdUridine_synth_TruA"/>
</dbReference>
<dbReference type="InterPro" id="IPR020097">
    <property type="entry name" value="PsdUridine_synth_TruA_a/b_dom"/>
</dbReference>
<dbReference type="InterPro" id="IPR020095">
    <property type="entry name" value="PsdUridine_synth_TruA_C"/>
</dbReference>
<dbReference type="InterPro" id="IPR020094">
    <property type="entry name" value="TruA/RsuA/RluB/E/F_N"/>
</dbReference>
<dbReference type="NCBIfam" id="TIGR00071">
    <property type="entry name" value="hisT_truA"/>
    <property type="match status" value="1"/>
</dbReference>
<dbReference type="PANTHER" id="PTHR11142">
    <property type="entry name" value="PSEUDOURIDYLATE SYNTHASE"/>
    <property type="match status" value="1"/>
</dbReference>
<dbReference type="PANTHER" id="PTHR11142:SF0">
    <property type="entry name" value="TRNA PSEUDOURIDINE SYNTHASE-LIKE 1"/>
    <property type="match status" value="1"/>
</dbReference>
<dbReference type="Pfam" id="PF01416">
    <property type="entry name" value="PseudoU_synth_1"/>
    <property type="match status" value="2"/>
</dbReference>
<dbReference type="PIRSF" id="PIRSF001430">
    <property type="entry name" value="tRNA_psdUrid_synth"/>
    <property type="match status" value="1"/>
</dbReference>
<dbReference type="SUPFAM" id="SSF55120">
    <property type="entry name" value="Pseudouridine synthase"/>
    <property type="match status" value="1"/>
</dbReference>